<proteinExistence type="inferred from homology"/>
<keyword id="KW-0963">Cytoplasm</keyword>
<keyword id="KW-0648">Protein biosynthesis</keyword>
<organism>
    <name type="scientific">Mycoplasma capricolum subsp. capricolum (strain California kid / ATCC 27343 / NCTC 10154)</name>
    <dbReference type="NCBI Taxonomy" id="340047"/>
    <lineage>
        <taxon>Bacteria</taxon>
        <taxon>Bacillati</taxon>
        <taxon>Mycoplasmatota</taxon>
        <taxon>Mollicutes</taxon>
        <taxon>Mycoplasmataceae</taxon>
        <taxon>Mycoplasma</taxon>
    </lineage>
</organism>
<protein>
    <recommendedName>
        <fullName evidence="1">Ribosome-recycling factor</fullName>
        <shortName evidence="1">RRF</shortName>
    </recommendedName>
    <alternativeName>
        <fullName evidence="1">Ribosome-releasing factor</fullName>
    </alternativeName>
</protein>
<gene>
    <name evidence="1" type="primary">frr</name>
    <name type="ordered locus">MCAP_0375</name>
</gene>
<reference key="1">
    <citation type="submission" date="2005-09" db="EMBL/GenBank/DDBJ databases">
        <authorList>
            <person name="Glass J.I."/>
            <person name="Lartigue C."/>
            <person name="Pfannkoch C."/>
            <person name="Baden-Tillson H."/>
            <person name="Smith H.O."/>
            <person name="Venter J.C."/>
            <person name="Roske K."/>
            <person name="Wise K.S."/>
            <person name="Calcutt M.J."/>
            <person name="Nelson W.C."/>
            <person name="Nierman W.C."/>
        </authorList>
    </citation>
    <scope>NUCLEOTIDE SEQUENCE [LARGE SCALE GENOMIC DNA]</scope>
    <source>
        <strain>California kid / ATCC 27343 / NCTC 10154</strain>
    </source>
</reference>
<accession>Q2SSA4</accession>
<dbReference type="EMBL" id="CP000123">
    <property type="protein sequence ID" value="ABC01476.1"/>
    <property type="molecule type" value="Genomic_DNA"/>
</dbReference>
<dbReference type="RefSeq" id="WP_011387260.1">
    <property type="nucleotide sequence ID" value="NC_007633.1"/>
</dbReference>
<dbReference type="SMR" id="Q2SSA4"/>
<dbReference type="GeneID" id="23778669"/>
<dbReference type="KEGG" id="mcp:MCAP_0375"/>
<dbReference type="HOGENOM" id="CLU_073981_2_0_14"/>
<dbReference type="PhylomeDB" id="Q2SSA4"/>
<dbReference type="Proteomes" id="UP000001928">
    <property type="component" value="Chromosome"/>
</dbReference>
<dbReference type="GO" id="GO:0005737">
    <property type="term" value="C:cytoplasm"/>
    <property type="evidence" value="ECO:0007669"/>
    <property type="project" value="UniProtKB-SubCell"/>
</dbReference>
<dbReference type="GO" id="GO:0043023">
    <property type="term" value="F:ribosomal large subunit binding"/>
    <property type="evidence" value="ECO:0007669"/>
    <property type="project" value="TreeGrafter"/>
</dbReference>
<dbReference type="GO" id="GO:0006415">
    <property type="term" value="P:translational termination"/>
    <property type="evidence" value="ECO:0007669"/>
    <property type="project" value="UniProtKB-UniRule"/>
</dbReference>
<dbReference type="CDD" id="cd00520">
    <property type="entry name" value="RRF"/>
    <property type="match status" value="1"/>
</dbReference>
<dbReference type="FunFam" id="1.10.132.20:FF:000001">
    <property type="entry name" value="Ribosome-recycling factor"/>
    <property type="match status" value="1"/>
</dbReference>
<dbReference type="FunFam" id="3.30.1360.40:FF:000001">
    <property type="entry name" value="Ribosome-recycling factor"/>
    <property type="match status" value="1"/>
</dbReference>
<dbReference type="Gene3D" id="3.30.1360.40">
    <property type="match status" value="1"/>
</dbReference>
<dbReference type="Gene3D" id="1.10.132.20">
    <property type="entry name" value="Ribosome-recycling factor"/>
    <property type="match status" value="1"/>
</dbReference>
<dbReference type="HAMAP" id="MF_00040">
    <property type="entry name" value="RRF"/>
    <property type="match status" value="1"/>
</dbReference>
<dbReference type="InterPro" id="IPR002661">
    <property type="entry name" value="Ribosome_recyc_fac"/>
</dbReference>
<dbReference type="InterPro" id="IPR023584">
    <property type="entry name" value="Ribosome_recyc_fac_dom"/>
</dbReference>
<dbReference type="InterPro" id="IPR036191">
    <property type="entry name" value="RRF_sf"/>
</dbReference>
<dbReference type="NCBIfam" id="TIGR00496">
    <property type="entry name" value="frr"/>
    <property type="match status" value="1"/>
</dbReference>
<dbReference type="PANTHER" id="PTHR20982:SF3">
    <property type="entry name" value="MITOCHONDRIAL RIBOSOME RECYCLING FACTOR PSEUDO 1"/>
    <property type="match status" value="1"/>
</dbReference>
<dbReference type="PANTHER" id="PTHR20982">
    <property type="entry name" value="RIBOSOME RECYCLING FACTOR"/>
    <property type="match status" value="1"/>
</dbReference>
<dbReference type="Pfam" id="PF01765">
    <property type="entry name" value="RRF"/>
    <property type="match status" value="1"/>
</dbReference>
<dbReference type="SUPFAM" id="SSF55194">
    <property type="entry name" value="Ribosome recycling factor, RRF"/>
    <property type="match status" value="1"/>
</dbReference>
<evidence type="ECO:0000255" key="1">
    <source>
        <dbReference type="HAMAP-Rule" id="MF_00040"/>
    </source>
</evidence>
<sequence length="182" mass="20840">MTDLILKNAELQMKETIDAYVIHLRQIRTGKASGAILDKVMVNYYGSLMPLNQISQITTPEPNLIIIKPYDRNVITEAVGAIHKADLGLNPISDATLIRIPIAPLTEDVRKNLVKKVHKELEGYKIRIRNIRRDAIDEIKKVENISKDLISDNEDKIQQITDKFIKQLDDLTKEKERELMTI</sequence>
<name>RRF_MYCCT</name>
<feature type="chain" id="PRO_1000003200" description="Ribosome-recycling factor">
    <location>
        <begin position="1"/>
        <end position="182"/>
    </location>
</feature>
<comment type="function">
    <text evidence="1">Responsible for the release of ribosomes from messenger RNA at the termination of protein biosynthesis. May increase the efficiency of translation by recycling ribosomes from one round of translation to another.</text>
</comment>
<comment type="subcellular location">
    <subcellularLocation>
        <location evidence="1">Cytoplasm</location>
    </subcellularLocation>
</comment>
<comment type="similarity">
    <text evidence="1">Belongs to the RRF family.</text>
</comment>